<organism>
    <name type="scientific">Staphylococcus aureus (strain Mu50 / ATCC 700699)</name>
    <dbReference type="NCBI Taxonomy" id="158878"/>
    <lineage>
        <taxon>Bacteria</taxon>
        <taxon>Bacillati</taxon>
        <taxon>Bacillota</taxon>
        <taxon>Bacilli</taxon>
        <taxon>Bacillales</taxon>
        <taxon>Staphylococcaceae</taxon>
        <taxon>Staphylococcus</taxon>
    </lineage>
</organism>
<dbReference type="EMBL" id="BA000017">
    <property type="protein sequence ID" value="BAB57608.1"/>
    <property type="molecule type" value="Genomic_DNA"/>
</dbReference>
<dbReference type="RefSeq" id="WP_001286320.1">
    <property type="nucleotide sequence ID" value="NC_002758.2"/>
</dbReference>
<dbReference type="SMR" id="Q99U42"/>
<dbReference type="GeneID" id="98345812"/>
<dbReference type="KEGG" id="sav:SAV1446"/>
<dbReference type="HOGENOM" id="CLU_140309_1_0_9"/>
<dbReference type="PhylomeDB" id="Q99U42"/>
<dbReference type="Proteomes" id="UP000002481">
    <property type="component" value="Chromosome"/>
</dbReference>
<dbReference type="GO" id="GO:0005737">
    <property type="term" value="C:cytoplasm"/>
    <property type="evidence" value="ECO:0007669"/>
    <property type="project" value="UniProtKB-SubCell"/>
</dbReference>
<dbReference type="GO" id="GO:0051301">
    <property type="term" value="P:cell division"/>
    <property type="evidence" value="ECO:0007669"/>
    <property type="project" value="UniProtKB-UniRule"/>
</dbReference>
<dbReference type="GO" id="GO:0008360">
    <property type="term" value="P:regulation of cell shape"/>
    <property type="evidence" value="ECO:0007669"/>
    <property type="project" value="UniProtKB-UniRule"/>
</dbReference>
<dbReference type="Gene3D" id="6.10.250.660">
    <property type="match status" value="1"/>
</dbReference>
<dbReference type="HAMAP" id="MF_02011">
    <property type="entry name" value="GpsB"/>
    <property type="match status" value="1"/>
</dbReference>
<dbReference type="InterPro" id="IPR011229">
    <property type="entry name" value="Cell_cycle_GpsB"/>
</dbReference>
<dbReference type="InterPro" id="IPR019933">
    <property type="entry name" value="DivIVA_domain"/>
</dbReference>
<dbReference type="InterPro" id="IPR007793">
    <property type="entry name" value="DivIVA_fam"/>
</dbReference>
<dbReference type="NCBIfam" id="TIGR03544">
    <property type="entry name" value="DivI1A_domain"/>
    <property type="match status" value="1"/>
</dbReference>
<dbReference type="NCBIfam" id="NF010725">
    <property type="entry name" value="PRK14127.1"/>
    <property type="match status" value="1"/>
</dbReference>
<dbReference type="PANTHER" id="PTHR35794:SF1">
    <property type="entry name" value="CELL CYCLE PROTEIN GPSB"/>
    <property type="match status" value="1"/>
</dbReference>
<dbReference type="PANTHER" id="PTHR35794">
    <property type="entry name" value="CELL DIVISION PROTEIN DIVIVA"/>
    <property type="match status" value="1"/>
</dbReference>
<dbReference type="Pfam" id="PF05103">
    <property type="entry name" value="DivIVA"/>
    <property type="match status" value="1"/>
</dbReference>
<dbReference type="PIRSF" id="PIRSF029938">
    <property type="entry name" value="UCP029938"/>
    <property type="match status" value="1"/>
</dbReference>
<protein>
    <recommendedName>
        <fullName evidence="1">Cell cycle protein GpsB</fullName>
    </recommendedName>
    <alternativeName>
        <fullName evidence="1">Guiding PBP1-shuttling protein</fullName>
    </alternativeName>
</protein>
<evidence type="ECO:0000255" key="1">
    <source>
        <dbReference type="HAMAP-Rule" id="MF_02011"/>
    </source>
</evidence>
<evidence type="ECO:0000256" key="2">
    <source>
        <dbReference type="SAM" id="MobiDB-lite"/>
    </source>
</evidence>
<proteinExistence type="inferred from homology"/>
<name>GPSB_STAAM</name>
<sequence length="114" mass="13151">MSDVSLKLSAKDIYEKDFEKTMARGYRREEVDAFLDDIIADYQKMADMNNEVVKLSEENHKLKKELEELRLRVATSRPQDNKSFSSNNTTTNTSSNNVDILKRISNLEKAVFGK</sequence>
<comment type="function">
    <text evidence="1">Divisome component that associates with the complex late in its assembly, after the Z-ring is formed, and is dependent on DivIC and PBP2B for its recruitment to the divisome. Together with EzrA, is a key component of the system that regulates PBP1 localization during cell cycle progression. Its main role could be the removal of PBP1 from the cell pole after pole maturation is completed. Also contributes to the recruitment of PBP1 to the division complex. Not essential for septum formation.</text>
</comment>
<comment type="subunit">
    <text evidence="1">Forms polymers through the coiled coil domains. Interacts with PBP1, MreC and EzrA.</text>
</comment>
<comment type="subcellular location">
    <subcellularLocation>
        <location evidence="1">Cytoplasm</location>
    </subcellularLocation>
    <text evidence="1">Shuttles between the lateral wall and the division site in a cell cycle-dependent manner.</text>
</comment>
<comment type="similarity">
    <text evidence="1">Belongs to the GpsB family.</text>
</comment>
<gene>
    <name evidence="1" type="primary">gpsB</name>
    <name type="ordered locus">SAV1446</name>
</gene>
<feature type="chain" id="PRO_0000337938" description="Cell cycle protein GpsB">
    <location>
        <begin position="1"/>
        <end position="114"/>
    </location>
</feature>
<feature type="region of interest" description="Disordered" evidence="2">
    <location>
        <begin position="74"/>
        <end position="99"/>
    </location>
</feature>
<feature type="coiled-coil region" evidence="1">
    <location>
        <begin position="42"/>
        <end position="77"/>
    </location>
</feature>
<feature type="compositionally biased region" description="Low complexity" evidence="2">
    <location>
        <begin position="85"/>
        <end position="97"/>
    </location>
</feature>
<keyword id="KW-0131">Cell cycle</keyword>
<keyword id="KW-0132">Cell division</keyword>
<keyword id="KW-0133">Cell shape</keyword>
<keyword id="KW-0175">Coiled coil</keyword>
<keyword id="KW-0963">Cytoplasm</keyword>
<accession>Q99U42</accession>
<reference key="1">
    <citation type="journal article" date="2001" name="Lancet">
        <title>Whole genome sequencing of meticillin-resistant Staphylococcus aureus.</title>
        <authorList>
            <person name="Kuroda M."/>
            <person name="Ohta T."/>
            <person name="Uchiyama I."/>
            <person name="Baba T."/>
            <person name="Yuzawa H."/>
            <person name="Kobayashi I."/>
            <person name="Cui L."/>
            <person name="Oguchi A."/>
            <person name="Aoki K."/>
            <person name="Nagai Y."/>
            <person name="Lian J.-Q."/>
            <person name="Ito T."/>
            <person name="Kanamori M."/>
            <person name="Matsumaru H."/>
            <person name="Maruyama A."/>
            <person name="Murakami H."/>
            <person name="Hosoyama A."/>
            <person name="Mizutani-Ui Y."/>
            <person name="Takahashi N.K."/>
            <person name="Sawano T."/>
            <person name="Inoue R."/>
            <person name="Kaito C."/>
            <person name="Sekimizu K."/>
            <person name="Hirakawa H."/>
            <person name="Kuhara S."/>
            <person name="Goto S."/>
            <person name="Yabuzaki J."/>
            <person name="Kanehisa M."/>
            <person name="Yamashita A."/>
            <person name="Oshima K."/>
            <person name="Furuya K."/>
            <person name="Yoshino C."/>
            <person name="Shiba T."/>
            <person name="Hattori M."/>
            <person name="Ogasawara N."/>
            <person name="Hayashi H."/>
            <person name="Hiramatsu K."/>
        </authorList>
    </citation>
    <scope>NUCLEOTIDE SEQUENCE [LARGE SCALE GENOMIC DNA]</scope>
    <source>
        <strain>Mu50 / ATCC 700699</strain>
    </source>
</reference>